<evidence type="ECO:0000255" key="1">
    <source>
        <dbReference type="HAMAP-Rule" id="MF_00034"/>
    </source>
</evidence>
<organism>
    <name type="scientific">Neisseria gonorrhoeae (strain ATCC 700825 / FA 1090)</name>
    <dbReference type="NCBI Taxonomy" id="242231"/>
    <lineage>
        <taxon>Bacteria</taxon>
        <taxon>Pseudomonadati</taxon>
        <taxon>Pseudomonadota</taxon>
        <taxon>Betaproteobacteria</taxon>
        <taxon>Neisseriales</taxon>
        <taxon>Neisseriaceae</taxon>
        <taxon>Neisseria</taxon>
    </lineage>
</organism>
<accession>Q5FA76</accession>
<name>RUVC_NEIG1</name>
<feature type="chain" id="PRO_0000225154" description="Crossover junction endodeoxyribonuclease RuvC">
    <location>
        <begin position="1"/>
        <end position="184"/>
    </location>
</feature>
<feature type="active site" evidence="1">
    <location>
        <position position="11"/>
    </location>
</feature>
<feature type="active site" evidence="1">
    <location>
        <position position="73"/>
    </location>
</feature>
<feature type="active site" evidence="1">
    <location>
        <position position="147"/>
    </location>
</feature>
<feature type="binding site" evidence="1">
    <location>
        <position position="11"/>
    </location>
    <ligand>
        <name>Mg(2+)</name>
        <dbReference type="ChEBI" id="CHEBI:18420"/>
        <label>1</label>
    </ligand>
</feature>
<feature type="binding site" evidence="1">
    <location>
        <position position="73"/>
    </location>
    <ligand>
        <name>Mg(2+)</name>
        <dbReference type="ChEBI" id="CHEBI:18420"/>
        <label>2</label>
    </ligand>
</feature>
<feature type="binding site" evidence="1">
    <location>
        <position position="147"/>
    </location>
    <ligand>
        <name>Mg(2+)</name>
        <dbReference type="ChEBI" id="CHEBI:18420"/>
        <label>1</label>
    </ligand>
</feature>
<reference key="1">
    <citation type="submission" date="2003-03" db="EMBL/GenBank/DDBJ databases">
        <title>The complete genome sequence of Neisseria gonorrhoeae.</title>
        <authorList>
            <person name="Lewis L.A."/>
            <person name="Gillaspy A.F."/>
            <person name="McLaughlin R.E."/>
            <person name="Gipson M."/>
            <person name="Ducey T.F."/>
            <person name="Ownbey T."/>
            <person name="Hartman K."/>
            <person name="Nydick C."/>
            <person name="Carson M.B."/>
            <person name="Vaughn J."/>
            <person name="Thomson C."/>
            <person name="Song L."/>
            <person name="Lin S."/>
            <person name="Yuan X."/>
            <person name="Najar F."/>
            <person name="Zhan M."/>
            <person name="Ren Q."/>
            <person name="Zhu H."/>
            <person name="Qi S."/>
            <person name="Kenton S.M."/>
            <person name="Lai H."/>
            <person name="White J.D."/>
            <person name="Clifton S."/>
            <person name="Roe B.A."/>
            <person name="Dyer D.W."/>
        </authorList>
    </citation>
    <scope>NUCLEOTIDE SEQUENCE [LARGE SCALE GENOMIC DNA]</scope>
    <source>
        <strain>ATCC 700825 / FA 1090</strain>
    </source>
</reference>
<comment type="function">
    <text evidence="1">The RuvA-RuvB-RuvC complex processes Holliday junction (HJ) DNA during genetic recombination and DNA repair. Endonuclease that resolves HJ intermediates. Cleaves cruciform DNA by making single-stranded nicks across the HJ at symmetrical positions within the homologous arms, yielding a 5'-phosphate and a 3'-hydroxyl group; requires a central core of homology in the junction. The consensus cleavage sequence is 5'-(A/T)TT(C/G)-3'. Cleavage occurs on the 3'-side of the TT dinucleotide at the point of strand exchange. HJ branch migration catalyzed by RuvA-RuvB allows RuvC to scan DNA until it finds its consensus sequence, where it cleaves and resolves the cruciform DNA.</text>
</comment>
<comment type="catalytic activity">
    <reaction evidence="1">
        <text>Endonucleolytic cleavage at a junction such as a reciprocal single-stranded crossover between two homologous DNA duplexes (Holliday junction).</text>
        <dbReference type="EC" id="3.1.21.10"/>
    </reaction>
</comment>
<comment type="cofactor">
    <cofactor evidence="1">
        <name>Mg(2+)</name>
        <dbReference type="ChEBI" id="CHEBI:18420"/>
    </cofactor>
    <text evidence="1">Binds 2 Mg(2+) ion per subunit.</text>
</comment>
<comment type="subunit">
    <text evidence="1">Homodimer which binds Holliday junction (HJ) DNA. The HJ becomes 2-fold symmetrical on binding to RuvC with unstacked arms; it has a different conformation from HJ DNA in complex with RuvA. In the full resolvosome a probable DNA-RuvA(4)-RuvB(12)-RuvC(2) complex forms which resolves the HJ.</text>
</comment>
<comment type="subcellular location">
    <subcellularLocation>
        <location evidence="1">Cytoplasm</location>
    </subcellularLocation>
</comment>
<comment type="similarity">
    <text evidence="1">Belongs to the RuvC family.</text>
</comment>
<protein>
    <recommendedName>
        <fullName evidence="1">Crossover junction endodeoxyribonuclease RuvC</fullName>
        <ecNumber evidence="1">3.1.21.10</ecNumber>
    </recommendedName>
    <alternativeName>
        <fullName evidence="1">Holliday junction nuclease RuvC</fullName>
    </alternativeName>
    <alternativeName>
        <fullName evidence="1">Holliday junction resolvase RuvC</fullName>
    </alternativeName>
</protein>
<proteinExistence type="inferred from homology"/>
<keyword id="KW-0963">Cytoplasm</keyword>
<keyword id="KW-0227">DNA damage</keyword>
<keyword id="KW-0233">DNA recombination</keyword>
<keyword id="KW-0234">DNA repair</keyword>
<keyword id="KW-0238">DNA-binding</keyword>
<keyword id="KW-0255">Endonuclease</keyword>
<keyword id="KW-0378">Hydrolase</keyword>
<keyword id="KW-0460">Magnesium</keyword>
<keyword id="KW-0479">Metal-binding</keyword>
<keyword id="KW-0540">Nuclease</keyword>
<keyword id="KW-1185">Reference proteome</keyword>
<sequence>MSATVRILGIDPGSRVTGFGIIDVRGRDHFYVASGCIKTPADEPLFTADRIAVIVRHIGEVVAVYKPQQAAVEQVFVNVNPASTLMLGQARGAALAALVSHKLPVSFTEYTALQVKQAVVGKGKAAKEQVQHMVVQMLGLSGTPQADAADGLAVALTHALRNHGLAAFTKLNPSGMQVKRGRFQ</sequence>
<dbReference type="EC" id="3.1.21.10" evidence="1"/>
<dbReference type="EMBL" id="AE004969">
    <property type="protein sequence ID" value="AAW88911.2"/>
    <property type="molecule type" value="Genomic_DNA"/>
</dbReference>
<dbReference type="RefSeq" id="YP_207323.2">
    <property type="nucleotide sequence ID" value="NC_002946.2"/>
</dbReference>
<dbReference type="SMR" id="Q5FA76"/>
<dbReference type="STRING" id="242231.NGO_0153"/>
<dbReference type="KEGG" id="ngo:NGO_0153"/>
<dbReference type="PATRIC" id="fig|242231.10.peg.197"/>
<dbReference type="HOGENOM" id="CLU_091257_2_0_4"/>
<dbReference type="Proteomes" id="UP000000535">
    <property type="component" value="Chromosome"/>
</dbReference>
<dbReference type="GO" id="GO:0005737">
    <property type="term" value="C:cytoplasm"/>
    <property type="evidence" value="ECO:0007669"/>
    <property type="project" value="UniProtKB-SubCell"/>
</dbReference>
<dbReference type="GO" id="GO:0048476">
    <property type="term" value="C:Holliday junction resolvase complex"/>
    <property type="evidence" value="ECO:0007669"/>
    <property type="project" value="UniProtKB-UniRule"/>
</dbReference>
<dbReference type="GO" id="GO:0008821">
    <property type="term" value="F:crossover junction DNA endonuclease activity"/>
    <property type="evidence" value="ECO:0007669"/>
    <property type="project" value="UniProtKB-UniRule"/>
</dbReference>
<dbReference type="GO" id="GO:0003677">
    <property type="term" value="F:DNA binding"/>
    <property type="evidence" value="ECO:0007669"/>
    <property type="project" value="UniProtKB-KW"/>
</dbReference>
<dbReference type="GO" id="GO:0000287">
    <property type="term" value="F:magnesium ion binding"/>
    <property type="evidence" value="ECO:0007669"/>
    <property type="project" value="UniProtKB-UniRule"/>
</dbReference>
<dbReference type="GO" id="GO:0006310">
    <property type="term" value="P:DNA recombination"/>
    <property type="evidence" value="ECO:0007669"/>
    <property type="project" value="UniProtKB-UniRule"/>
</dbReference>
<dbReference type="GO" id="GO:0006281">
    <property type="term" value="P:DNA repair"/>
    <property type="evidence" value="ECO:0007669"/>
    <property type="project" value="UniProtKB-UniRule"/>
</dbReference>
<dbReference type="CDD" id="cd16962">
    <property type="entry name" value="RuvC"/>
    <property type="match status" value="1"/>
</dbReference>
<dbReference type="FunFam" id="3.30.420.10:FF:000002">
    <property type="entry name" value="Crossover junction endodeoxyribonuclease RuvC"/>
    <property type="match status" value="1"/>
</dbReference>
<dbReference type="Gene3D" id="3.30.420.10">
    <property type="entry name" value="Ribonuclease H-like superfamily/Ribonuclease H"/>
    <property type="match status" value="1"/>
</dbReference>
<dbReference type="HAMAP" id="MF_00034">
    <property type="entry name" value="RuvC"/>
    <property type="match status" value="1"/>
</dbReference>
<dbReference type="InterPro" id="IPR012337">
    <property type="entry name" value="RNaseH-like_sf"/>
</dbReference>
<dbReference type="InterPro" id="IPR036397">
    <property type="entry name" value="RNaseH_sf"/>
</dbReference>
<dbReference type="InterPro" id="IPR020563">
    <property type="entry name" value="X-over_junc_endoDNase_Mg_BS"/>
</dbReference>
<dbReference type="InterPro" id="IPR002176">
    <property type="entry name" value="X-over_junc_endoDNase_RuvC"/>
</dbReference>
<dbReference type="NCBIfam" id="TIGR00228">
    <property type="entry name" value="ruvC"/>
    <property type="match status" value="1"/>
</dbReference>
<dbReference type="PANTHER" id="PTHR30194">
    <property type="entry name" value="CROSSOVER JUNCTION ENDODEOXYRIBONUCLEASE RUVC"/>
    <property type="match status" value="1"/>
</dbReference>
<dbReference type="PANTHER" id="PTHR30194:SF3">
    <property type="entry name" value="CROSSOVER JUNCTION ENDODEOXYRIBONUCLEASE RUVC"/>
    <property type="match status" value="1"/>
</dbReference>
<dbReference type="Pfam" id="PF02075">
    <property type="entry name" value="RuvC"/>
    <property type="match status" value="1"/>
</dbReference>
<dbReference type="PRINTS" id="PR00696">
    <property type="entry name" value="RSOLVASERUVC"/>
</dbReference>
<dbReference type="SUPFAM" id="SSF53098">
    <property type="entry name" value="Ribonuclease H-like"/>
    <property type="match status" value="1"/>
</dbReference>
<dbReference type="PROSITE" id="PS01321">
    <property type="entry name" value="RUVC"/>
    <property type="match status" value="1"/>
</dbReference>
<gene>
    <name evidence="1" type="primary">ruvC</name>
    <name type="ordered locus">NGO_0153</name>
</gene>